<organism>
    <name type="scientific">Arabidopsis thaliana</name>
    <name type="common">Mouse-ear cress</name>
    <dbReference type="NCBI Taxonomy" id="3702"/>
    <lineage>
        <taxon>Eukaryota</taxon>
        <taxon>Viridiplantae</taxon>
        <taxon>Streptophyta</taxon>
        <taxon>Embryophyta</taxon>
        <taxon>Tracheophyta</taxon>
        <taxon>Spermatophyta</taxon>
        <taxon>Magnoliopsida</taxon>
        <taxon>eudicotyledons</taxon>
        <taxon>Gunneridae</taxon>
        <taxon>Pentapetalae</taxon>
        <taxon>rosids</taxon>
        <taxon>malvids</taxon>
        <taxon>Brassicales</taxon>
        <taxon>Brassicaceae</taxon>
        <taxon>Camelineae</taxon>
        <taxon>Arabidopsis</taxon>
    </lineage>
</organism>
<accession>Q9FII5</accession>
<evidence type="ECO:0000250" key="1">
    <source>
        <dbReference type="UniProtKB" id="C0LGT6"/>
    </source>
</evidence>
<evidence type="ECO:0000250" key="2">
    <source>
        <dbReference type="UniProtKB" id="O22476"/>
    </source>
</evidence>
<evidence type="ECO:0000250" key="3">
    <source>
        <dbReference type="UniProtKB" id="Q9M0G7"/>
    </source>
</evidence>
<evidence type="ECO:0000255" key="4"/>
<evidence type="ECO:0000255" key="5">
    <source>
        <dbReference type="PROSITE-ProRule" id="PRU00159"/>
    </source>
</evidence>
<evidence type="ECO:0000255" key="6">
    <source>
        <dbReference type="PROSITE-ProRule" id="PRU00498"/>
    </source>
</evidence>
<evidence type="ECO:0000255" key="7">
    <source>
        <dbReference type="PROSITE-ProRule" id="PRU10027"/>
    </source>
</evidence>
<evidence type="ECO:0000269" key="8">
    <source>
    </source>
</evidence>
<evidence type="ECO:0000269" key="9">
    <source>
    </source>
</evidence>
<evidence type="ECO:0000269" key="10">
    <source>
    </source>
</evidence>
<evidence type="ECO:0000269" key="11">
    <source>
    </source>
</evidence>
<evidence type="ECO:0000269" key="12">
    <source>
    </source>
</evidence>
<evidence type="ECO:0000269" key="13">
    <source>
    </source>
</evidence>
<evidence type="ECO:0000269" key="14">
    <source ref="12"/>
</evidence>
<evidence type="ECO:0000303" key="15">
    <source>
    </source>
</evidence>
<evidence type="ECO:0000303" key="16">
    <source>
    </source>
</evidence>
<evidence type="ECO:0000312" key="17">
    <source>
        <dbReference type="Araport" id="AT5G61480"/>
    </source>
</evidence>
<evidence type="ECO:0000312" key="18">
    <source>
        <dbReference type="EMBL" id="BAB10447.1"/>
    </source>
</evidence>
<evidence type="ECO:0007744" key="19">
    <source>
        <dbReference type="PDB" id="5GIJ"/>
    </source>
</evidence>
<evidence type="ECO:0007744" key="20">
    <source>
        <dbReference type="PDB" id="5GQR"/>
    </source>
</evidence>
<evidence type="ECO:0007744" key="21">
    <source>
        <dbReference type="PDB" id="5GR9"/>
    </source>
</evidence>
<evidence type="ECO:0007744" key="22">
    <source>
        <dbReference type="PDB" id="5JFI"/>
    </source>
</evidence>
<evidence type="ECO:0007744" key="23">
    <source>
        <dbReference type="PDB" id="5JFK"/>
    </source>
</evidence>
<evidence type="ECO:0007829" key="24">
    <source>
        <dbReference type="PDB" id="5GIJ"/>
    </source>
</evidence>
<evidence type="ECO:0007829" key="25">
    <source>
        <dbReference type="PDB" id="5GQR"/>
    </source>
</evidence>
<evidence type="ECO:0007829" key="26">
    <source>
        <dbReference type="PDB" id="5GR9"/>
    </source>
</evidence>
<evidence type="ECO:0007829" key="27">
    <source>
        <dbReference type="PDB" id="5JFI"/>
    </source>
</evidence>
<evidence type="ECO:0007829" key="28">
    <source>
        <dbReference type="PDB" id="5JFK"/>
    </source>
</evidence>
<comment type="function">
    <text evidence="8 9 11">Acts with CLE41p and CLE44p peptides as a ligand-receptor pair in a signal transduction pathway involved in the regulation of procambium maintenance and polarity during vascular-tissue development (PubMed:17570668, PubMed:18812507, PubMed:27055373). Mediates repression of tracheary element differentiation and the promotion of procambial cells formation and polar division adjacent to phloem cells in the veins (PubMed:17570668, PubMed:18812507, PubMed:27055373).</text>
</comment>
<comment type="catalytic activity">
    <reaction>
        <text>L-seryl-[protein] + ATP = O-phospho-L-seryl-[protein] + ADP + H(+)</text>
        <dbReference type="Rhea" id="RHEA:17989"/>
        <dbReference type="Rhea" id="RHEA-COMP:9863"/>
        <dbReference type="Rhea" id="RHEA-COMP:11604"/>
        <dbReference type="ChEBI" id="CHEBI:15378"/>
        <dbReference type="ChEBI" id="CHEBI:29999"/>
        <dbReference type="ChEBI" id="CHEBI:30616"/>
        <dbReference type="ChEBI" id="CHEBI:83421"/>
        <dbReference type="ChEBI" id="CHEBI:456216"/>
        <dbReference type="EC" id="2.7.11.1"/>
    </reaction>
</comment>
<comment type="catalytic activity">
    <reaction>
        <text>L-threonyl-[protein] + ATP = O-phospho-L-threonyl-[protein] + ADP + H(+)</text>
        <dbReference type="Rhea" id="RHEA:46608"/>
        <dbReference type="Rhea" id="RHEA-COMP:11060"/>
        <dbReference type="Rhea" id="RHEA-COMP:11605"/>
        <dbReference type="ChEBI" id="CHEBI:15378"/>
        <dbReference type="ChEBI" id="CHEBI:30013"/>
        <dbReference type="ChEBI" id="CHEBI:30616"/>
        <dbReference type="ChEBI" id="CHEBI:61977"/>
        <dbReference type="ChEBI" id="CHEBI:456216"/>
        <dbReference type="EC" id="2.7.11.1"/>
    </reaction>
</comment>
<comment type="subunit">
    <text evidence="9 10 11 12 13">Interacts specifically with the mature peptides CLE41p and CLE44p, especially in the presence of SERK2 (PubMed:18812507, PubMed:27055373, PubMed:27449136, PubMed:27498761). Interacts with LURE1.2 (PubMed:26863186).</text>
</comment>
<comment type="interaction">
    <interactant intactId="EBI-15730235">
        <id>Q9FII5</id>
    </interactant>
    <interactant intactId="EBI-1798250">
        <id>Q39011</id>
        <label>ASK7</label>
    </interactant>
    <organismsDiffer>false</organismsDiffer>
    <experiments>2</experiments>
</comment>
<comment type="interaction">
    <interactant intactId="EBI-15730235">
        <id>Q9FII5</id>
    </interactant>
    <interactant intactId="EBI-16912451">
        <id>Q9SUQ3</id>
        <label>At4g23740</label>
    </interactant>
    <organismsDiffer>false</organismsDiffer>
    <experiments>3</experiments>
</comment>
<comment type="interaction">
    <interactant intactId="EBI-15730235">
        <id>Q9FII5</id>
    </interactant>
    <interactant intactId="EBI-16914444">
        <id>Q9LJY0</id>
        <label>PRK4</label>
    </interactant>
    <organismsDiffer>false</organismsDiffer>
    <experiments>2</experiments>
</comment>
<comment type="subcellular location">
    <subcellularLocation>
        <location evidence="9 13">Cell membrane</location>
        <topology evidence="9">Single-pass type I membrane protein</topology>
    </subcellularLocation>
</comment>
<comment type="tissue specificity">
    <text evidence="8 9">Widely expressed along the vascular strands. In roots and hypocotyls, confined to procambial cells.</text>
</comment>
<comment type="disruption phenotype">
    <text evidence="8 9 11">Reduced procambial cells number, and adjacent or interspersed xylem and phloem formation.</text>
</comment>
<comment type="similarity">
    <text evidence="5">Belongs to the protein kinase superfamily. Ser/Thr protein kinase family.</text>
</comment>
<gene>
    <name evidence="16" type="primary">TDR</name>
    <name evidence="15" type="synonym">PXY</name>
    <name evidence="17" type="ordered locus">At5g61480</name>
    <name evidence="18" type="ORF">MCI2.4</name>
</gene>
<keyword id="KW-0002">3D-structure</keyword>
<keyword id="KW-0067">ATP-binding</keyword>
<keyword id="KW-1003">Cell membrane</keyword>
<keyword id="KW-0217">Developmental protein</keyword>
<keyword id="KW-1015">Disulfide bond</keyword>
<keyword id="KW-0325">Glycoprotein</keyword>
<keyword id="KW-0418">Kinase</keyword>
<keyword id="KW-0433">Leucine-rich repeat</keyword>
<keyword id="KW-0472">Membrane</keyword>
<keyword id="KW-0547">Nucleotide-binding</keyword>
<keyword id="KW-0597">Phosphoprotein</keyword>
<keyword id="KW-0675">Receptor</keyword>
<keyword id="KW-1185">Reference proteome</keyword>
<keyword id="KW-0677">Repeat</keyword>
<keyword id="KW-0723">Serine/threonine-protein kinase</keyword>
<keyword id="KW-0732">Signal</keyword>
<keyword id="KW-0808">Transferase</keyword>
<keyword id="KW-0812">Transmembrane</keyword>
<keyword id="KW-1133">Transmembrane helix</keyword>
<name>TDR_ARATH</name>
<protein>
    <recommendedName>
        <fullName>Leucine-rich repeat receptor-like protein kinase TDR</fullName>
        <ecNumber>2.7.11.1</ecNumber>
    </recommendedName>
    <alternativeName>
        <fullName evidence="15">Protein PHLOEM INTERCALATED WITH XYLEM</fullName>
    </alternativeName>
    <alternativeName>
        <fullName evidence="16">Tracheary element differentiation inhibitory factor receptor</fullName>
        <shortName evidence="16">AtTDR</shortName>
        <shortName evidence="16">TDIF receptor</shortName>
    </alternativeName>
</protein>
<sequence>MKKKNISPSLVLHPLLLLLLPFFAFNSLALKFSPQLLSLLSLKTSLSGPPSAFQDWKVPVNGQNDAVWCSWSGVVCDNVTAQVISLDLSHRNLSGRIPIQIRYLSSLLYLNLSGNSLEGSFPTSIFDLTKLTTLDISRNSFDSSFPPGISKLKFLKVFNAFSNNFEGLLPSDVSRLRFLEELNFGGSYFEGEIPAAYGGLQRLKFIHLAGNVLGGKLPPRLGLLTELQHMEIGYNHFNGNIPSEFALLSNLKYFDVSNCSLSGSLPQELGNLSNLETLFLFQNGFTGEIPESYSNLKSLKLLDFSSNQLSGSIPSGFSTLKNLTWLSLISNNLSGEVPEGIGELPELTTLFLWNNNFTGVLPHKLGSNGKLETMDVSNNSFTGTIPSSLCHGNKLYKLILFSNMFEGELPKSLTRCESLWRFRSQNNRLNGTIPIGFGSLRNLTFVDLSNNRFTDQIPADFATAPVLQYLNLSTNFFHRKLPENIWKAPNLQIFSASFSNLIGEIPNYVGCKSFYRIELQGNSLNGTIPWDIGHCEKLLCLNLSQNHLNGIIPWEISTLPSIADVDLSHNLLTGTIPSDFGSSKTITTFNVSYNQLIGPIPSGSFAHLNPSFFSSNEGLCGDLVGKPCNSDRFNAGNADIDGHHKEERPKKTAGAIVWILAAAIGVGFFVLVAATRCFQKSYGNRVDGGGRNGGDIGPWKLTAFQRLNFTADDVVECLSKTDNILGMGSTGTVYKAEMPNGEIIAVKKLWGKNKENGKIRRRKSGVLAEVDVLGNVRHRNIVRLLGCCTNRDCTMLLYEYMPNGSLDDLLHGGDKTMTAAAEWTALYQIAIGVAQGICYLHHDCDPVIVHRDLKPSNILLDADFEARVADFGVAKLIQTDESMSVVAGSYGYIAPEYAYTLQVDKKSDIYSYGVILLEIITGKRSVEPEFGEGNSIVDWVRSKLKTKEDVEEVLDKSMGRSCSLIREEMKQMLRIALLCTSRSPTDRPPMRDVLLILQEAKPKRKTVGDNVIVVGDVNDVNFEDVCSVDVGHDVKCQRIGV</sequence>
<dbReference type="EC" id="2.7.11.1"/>
<dbReference type="EMBL" id="FJ708809">
    <property type="protein sequence ID" value="ACN59400.1"/>
    <property type="molecule type" value="mRNA"/>
</dbReference>
<dbReference type="EMBL" id="AB016887">
    <property type="protein sequence ID" value="BAB10447.1"/>
    <property type="molecule type" value="Genomic_DNA"/>
</dbReference>
<dbReference type="EMBL" id="AB012239">
    <property type="protein sequence ID" value="BAB10447.1"/>
    <property type="status" value="JOINED"/>
    <property type="molecule type" value="Genomic_DNA"/>
</dbReference>
<dbReference type="EMBL" id="CP002688">
    <property type="protein sequence ID" value="AED97473.1"/>
    <property type="molecule type" value="Genomic_DNA"/>
</dbReference>
<dbReference type="RefSeq" id="NP_200956.1">
    <property type="nucleotide sequence ID" value="NM_125541.2"/>
</dbReference>
<dbReference type="PDB" id="5GIJ">
    <property type="method" value="X-ray"/>
    <property type="resolution" value="3.00 A"/>
    <property type="chains" value="B=31-631"/>
</dbReference>
<dbReference type="PDB" id="5GQR">
    <property type="method" value="X-ray"/>
    <property type="resolution" value="3.50 A"/>
    <property type="chains" value="B=32-629"/>
</dbReference>
<dbReference type="PDB" id="5GR9">
    <property type="method" value="X-ray"/>
    <property type="resolution" value="2.77 A"/>
    <property type="chains" value="B=31-629"/>
</dbReference>
<dbReference type="PDB" id="5JFI">
    <property type="method" value="X-ray"/>
    <property type="resolution" value="2.75 A"/>
    <property type="chains" value="A/B=30-642"/>
</dbReference>
<dbReference type="PDB" id="5JFK">
    <property type="method" value="X-ray"/>
    <property type="resolution" value="2.65 A"/>
    <property type="chains" value="A/B=30-642"/>
</dbReference>
<dbReference type="PDBsum" id="5GIJ"/>
<dbReference type="PDBsum" id="5GQR"/>
<dbReference type="PDBsum" id="5GR9"/>
<dbReference type="PDBsum" id="5JFI"/>
<dbReference type="PDBsum" id="5JFK"/>
<dbReference type="SMR" id="Q9FII5"/>
<dbReference type="BioGRID" id="21513">
    <property type="interactions" value="22"/>
</dbReference>
<dbReference type="DIP" id="DIP-46414N"/>
<dbReference type="FunCoup" id="Q9FII5">
    <property type="interactions" value="847"/>
</dbReference>
<dbReference type="IntAct" id="Q9FII5">
    <property type="interactions" value="25"/>
</dbReference>
<dbReference type="STRING" id="3702.Q9FII5"/>
<dbReference type="GlyCosmos" id="Q9FII5">
    <property type="glycosylation" value="15 sites, No reported glycans"/>
</dbReference>
<dbReference type="GlyGen" id="Q9FII5">
    <property type="glycosylation" value="16 sites"/>
</dbReference>
<dbReference type="iPTMnet" id="Q9FII5"/>
<dbReference type="PaxDb" id="3702-AT5G61480.1"/>
<dbReference type="ProteomicsDB" id="246433"/>
<dbReference type="EnsemblPlants" id="AT5G61480.1">
    <property type="protein sequence ID" value="AT5G61480.1"/>
    <property type="gene ID" value="AT5G61480"/>
</dbReference>
<dbReference type="GeneID" id="836269"/>
<dbReference type="Gramene" id="AT5G61480.1">
    <property type="protein sequence ID" value="AT5G61480.1"/>
    <property type="gene ID" value="AT5G61480"/>
</dbReference>
<dbReference type="KEGG" id="ath:AT5G61480"/>
<dbReference type="Araport" id="AT5G61480"/>
<dbReference type="TAIR" id="AT5G61480">
    <property type="gene designation" value="PXY"/>
</dbReference>
<dbReference type="eggNOG" id="ENOG502QSRW">
    <property type="taxonomic scope" value="Eukaryota"/>
</dbReference>
<dbReference type="HOGENOM" id="CLU_000288_22_1_1"/>
<dbReference type="InParanoid" id="Q9FII5"/>
<dbReference type="OMA" id="FHANYNR"/>
<dbReference type="OrthoDB" id="676979at2759"/>
<dbReference type="PhylomeDB" id="Q9FII5"/>
<dbReference type="PRO" id="PR:Q9FII5"/>
<dbReference type="Proteomes" id="UP000006548">
    <property type="component" value="Chromosome 5"/>
</dbReference>
<dbReference type="ExpressionAtlas" id="Q9FII5">
    <property type="expression patterns" value="baseline and differential"/>
</dbReference>
<dbReference type="GO" id="GO:0005886">
    <property type="term" value="C:plasma membrane"/>
    <property type="evidence" value="ECO:0000314"/>
    <property type="project" value="UniProtKB"/>
</dbReference>
<dbReference type="GO" id="GO:0005524">
    <property type="term" value="F:ATP binding"/>
    <property type="evidence" value="ECO:0007669"/>
    <property type="project" value="UniProtKB-KW"/>
</dbReference>
<dbReference type="GO" id="GO:0106310">
    <property type="term" value="F:protein serine kinase activity"/>
    <property type="evidence" value="ECO:0007669"/>
    <property type="project" value="RHEA"/>
</dbReference>
<dbReference type="GO" id="GO:0004674">
    <property type="term" value="F:protein serine/threonine kinase activity"/>
    <property type="evidence" value="ECO:0007669"/>
    <property type="project" value="UniProtKB-KW"/>
</dbReference>
<dbReference type="GO" id="GO:0051301">
    <property type="term" value="P:cell division"/>
    <property type="evidence" value="ECO:0000315"/>
    <property type="project" value="TAIR"/>
</dbReference>
<dbReference type="GO" id="GO:0010087">
    <property type="term" value="P:phloem or xylem histogenesis"/>
    <property type="evidence" value="ECO:0000315"/>
    <property type="project" value="TAIR"/>
</dbReference>
<dbReference type="GO" id="GO:0010067">
    <property type="term" value="P:procambium histogenesis"/>
    <property type="evidence" value="ECO:0000314"/>
    <property type="project" value="UniProtKB"/>
</dbReference>
<dbReference type="GO" id="GO:0010223">
    <property type="term" value="P:secondary shoot formation"/>
    <property type="evidence" value="ECO:0000315"/>
    <property type="project" value="TAIR"/>
</dbReference>
<dbReference type="GO" id="GO:0010089">
    <property type="term" value="P:xylem development"/>
    <property type="evidence" value="ECO:0000315"/>
    <property type="project" value="UniProtKB"/>
</dbReference>
<dbReference type="FunFam" id="3.80.10.10:FF:000909">
    <property type="entry name" value="Leucine-rich repeat receptor-like protein kinase"/>
    <property type="match status" value="1"/>
</dbReference>
<dbReference type="FunFam" id="3.80.10.10:FF:000233">
    <property type="entry name" value="Leucine-rich repeat receptor-like protein kinase TDR"/>
    <property type="match status" value="1"/>
</dbReference>
<dbReference type="FunFam" id="3.80.10.10:FF:001319">
    <property type="entry name" value="Leucine-rich repeat receptor-like protein kinase TDR"/>
    <property type="match status" value="1"/>
</dbReference>
<dbReference type="FunFam" id="1.10.510.10:FF:000632">
    <property type="entry name" value="leucine-rich repeat receptor-like protein kinase TDR"/>
    <property type="match status" value="1"/>
</dbReference>
<dbReference type="FunFam" id="3.30.200.20:FF:000292">
    <property type="entry name" value="Leucine-rich repeat receptor-like serine/threonine-protein kinase BAM1"/>
    <property type="match status" value="1"/>
</dbReference>
<dbReference type="Gene3D" id="3.30.200.20">
    <property type="entry name" value="Phosphorylase Kinase, domain 1"/>
    <property type="match status" value="1"/>
</dbReference>
<dbReference type="Gene3D" id="3.80.10.10">
    <property type="entry name" value="Ribonuclease Inhibitor"/>
    <property type="match status" value="3"/>
</dbReference>
<dbReference type="Gene3D" id="1.10.510.10">
    <property type="entry name" value="Transferase(Phosphotransferase) domain 1"/>
    <property type="match status" value="1"/>
</dbReference>
<dbReference type="InterPro" id="IPR011009">
    <property type="entry name" value="Kinase-like_dom_sf"/>
</dbReference>
<dbReference type="InterPro" id="IPR001611">
    <property type="entry name" value="Leu-rich_rpt"/>
</dbReference>
<dbReference type="InterPro" id="IPR003591">
    <property type="entry name" value="Leu-rich_rpt_typical-subtyp"/>
</dbReference>
<dbReference type="InterPro" id="IPR032675">
    <property type="entry name" value="LRR_dom_sf"/>
</dbReference>
<dbReference type="InterPro" id="IPR013210">
    <property type="entry name" value="LRR_N_plant-typ"/>
</dbReference>
<dbReference type="InterPro" id="IPR055414">
    <property type="entry name" value="LRR_R13L4/SHOC2-like"/>
</dbReference>
<dbReference type="InterPro" id="IPR050647">
    <property type="entry name" value="Plant_LRR-RLKs"/>
</dbReference>
<dbReference type="InterPro" id="IPR000719">
    <property type="entry name" value="Prot_kinase_dom"/>
</dbReference>
<dbReference type="InterPro" id="IPR017441">
    <property type="entry name" value="Protein_kinase_ATP_BS"/>
</dbReference>
<dbReference type="InterPro" id="IPR008271">
    <property type="entry name" value="Ser/Thr_kinase_AS"/>
</dbReference>
<dbReference type="PANTHER" id="PTHR48056">
    <property type="entry name" value="LRR RECEPTOR-LIKE SERINE/THREONINE-PROTEIN KINASE-RELATED"/>
    <property type="match status" value="1"/>
</dbReference>
<dbReference type="PANTHER" id="PTHR48056:SF25">
    <property type="entry name" value="PROTEIN KINASE DOMAIN-CONTAINING PROTEIN"/>
    <property type="match status" value="1"/>
</dbReference>
<dbReference type="Pfam" id="PF00560">
    <property type="entry name" value="LRR_1"/>
    <property type="match status" value="4"/>
</dbReference>
<dbReference type="Pfam" id="PF23598">
    <property type="entry name" value="LRR_14"/>
    <property type="match status" value="1"/>
</dbReference>
<dbReference type="Pfam" id="PF13855">
    <property type="entry name" value="LRR_8"/>
    <property type="match status" value="1"/>
</dbReference>
<dbReference type="Pfam" id="PF08263">
    <property type="entry name" value="LRRNT_2"/>
    <property type="match status" value="1"/>
</dbReference>
<dbReference type="Pfam" id="PF00069">
    <property type="entry name" value="Pkinase"/>
    <property type="match status" value="1"/>
</dbReference>
<dbReference type="SMART" id="SM00369">
    <property type="entry name" value="LRR_TYP"/>
    <property type="match status" value="9"/>
</dbReference>
<dbReference type="SMART" id="SM00220">
    <property type="entry name" value="S_TKc"/>
    <property type="match status" value="1"/>
</dbReference>
<dbReference type="SUPFAM" id="SSF52058">
    <property type="entry name" value="L domain-like"/>
    <property type="match status" value="1"/>
</dbReference>
<dbReference type="SUPFAM" id="SSF56112">
    <property type="entry name" value="Protein kinase-like (PK-like)"/>
    <property type="match status" value="1"/>
</dbReference>
<dbReference type="SUPFAM" id="SSF52047">
    <property type="entry name" value="RNI-like"/>
    <property type="match status" value="1"/>
</dbReference>
<dbReference type="PROSITE" id="PS00107">
    <property type="entry name" value="PROTEIN_KINASE_ATP"/>
    <property type="match status" value="1"/>
</dbReference>
<dbReference type="PROSITE" id="PS50011">
    <property type="entry name" value="PROTEIN_KINASE_DOM"/>
    <property type="match status" value="1"/>
</dbReference>
<dbReference type="PROSITE" id="PS00108">
    <property type="entry name" value="PROTEIN_KINASE_ST"/>
    <property type="match status" value="1"/>
</dbReference>
<proteinExistence type="evidence at protein level"/>
<reference key="1">
    <citation type="journal article" date="1998" name="DNA Res.">
        <title>Structural analysis of Arabidopsis thaliana chromosome 5. VIII. Sequence features of the regions of 1,081,958 bp covered by seventeen physically assigned P1 and TAC clones.</title>
        <authorList>
            <person name="Asamizu E."/>
            <person name="Sato S."/>
            <person name="Kaneko T."/>
            <person name="Nakamura Y."/>
            <person name="Kotani H."/>
            <person name="Miyajima N."/>
            <person name="Tabata S."/>
        </authorList>
    </citation>
    <scope>NUCLEOTIDE SEQUENCE [LARGE SCALE GENOMIC DNA]</scope>
    <source>
        <strain>cv. Columbia</strain>
    </source>
</reference>
<reference key="2">
    <citation type="journal article" date="1998" name="DNA Res.">
        <title>Structural analysis of Arabidopsis thaliana chromosome 5. VI. Sequence features of the regions of 1,367,185 bp covered by 19 physically assigned P1 and TAC clones.</title>
        <authorList>
            <person name="Kotani H."/>
            <person name="Nakamura Y."/>
            <person name="Sato S."/>
            <person name="Asamizu E."/>
            <person name="Kaneko T."/>
            <person name="Miyajima N."/>
            <person name="Tabata S."/>
        </authorList>
    </citation>
    <scope>NUCLEOTIDE SEQUENCE [LARGE SCALE GENOMIC DNA]</scope>
    <source>
        <strain>cv. Columbia</strain>
    </source>
</reference>
<reference key="3">
    <citation type="journal article" date="2017" name="Plant J.">
        <title>Araport11: a complete reannotation of the Arabidopsis thaliana reference genome.</title>
        <authorList>
            <person name="Cheng C.Y."/>
            <person name="Krishnakumar V."/>
            <person name="Chan A.P."/>
            <person name="Thibaud-Nissen F."/>
            <person name="Schobel S."/>
            <person name="Town C.D."/>
        </authorList>
    </citation>
    <scope>GENOME REANNOTATION</scope>
    <source>
        <strain>cv. Columbia</strain>
    </source>
</reference>
<reference key="4">
    <citation type="journal article" date="2010" name="BMC Genomics">
        <title>Genome-wide cloning and sequence analysis of leucine-rich repeat receptor-like protein kinase genes in Arabidopsis thaliana.</title>
        <authorList>
            <person name="Gou X."/>
            <person name="He K."/>
            <person name="Yang H."/>
            <person name="Yuan T."/>
            <person name="Lin H."/>
            <person name="Clouse S.D."/>
            <person name="Li J."/>
        </authorList>
    </citation>
    <scope>NUCLEOTIDE SEQUENCE [LARGE SCALE MRNA]</scope>
    <source>
        <strain>cv. Columbia</strain>
    </source>
</reference>
<reference key="5">
    <citation type="journal article" date="2007" name="Curr. Biol.">
        <title>PXY, a receptor-like kinase essential for maintaining polarity during plant vascular-tissue development.</title>
        <authorList>
            <person name="Fisher K."/>
            <person name="Turner S."/>
        </authorList>
    </citation>
    <scope>FUNCTION</scope>
    <scope>DISRUPTION PHENOTYPE</scope>
    <scope>TISSUE SPECIFICITY</scope>
</reference>
<reference key="6">
    <citation type="journal article" date="2008" name="Proc. Natl. Acad. Sci. U.S.A.">
        <title>Non-cell-autonomous control of vascular stem cell fate by a CLE peptide/receptor system.</title>
        <authorList>
            <person name="Hirakawa Y."/>
            <person name="Shinohara H."/>
            <person name="Kondo Y."/>
            <person name="Inoue A."/>
            <person name="Nakanomyo I."/>
            <person name="Ogawa M."/>
            <person name="Sawa S."/>
            <person name="Ohashi-Ito K."/>
            <person name="Matsubayashi Y."/>
            <person name="Fukuda H."/>
        </authorList>
    </citation>
    <scope>FUNCTION</scope>
    <scope>DISRUPTION PHENOTYPE</scope>
    <scope>SUBCELLULAR LOCATION</scope>
    <scope>INTERACTION WITH CLE41P AND CLE44P</scope>
    <scope>TISSUE SPECIFICITY</scope>
</reference>
<reference key="7">
    <citation type="journal article" date="2010" name="Protoplasma">
        <title>CLE peptide signaling during plant development.</title>
        <authorList>
            <person name="Wang G."/>
            <person name="Fiers M."/>
        </authorList>
    </citation>
    <scope>REVIEW</scope>
</reference>
<reference key="8">
    <citation type="journal article" date="2016" name="Nature">
        <title>A receptor heteromer mediates the male perception of female attractants in plants.</title>
        <authorList>
            <person name="Wang T."/>
            <person name="Liang L."/>
            <person name="Xue Y."/>
            <person name="Jia P.F."/>
            <person name="Chen W."/>
            <person name="Zhang M.X."/>
            <person name="Wang Y.C."/>
            <person name="Li H.J."/>
            <person name="Yang W.C."/>
        </authorList>
    </citation>
    <scope>INTERACTION WITH LURE1.2</scope>
</reference>
<reference key="9">
    <citation type="journal article" date="2016" name="Cell Res.">
        <title>Crystal structure of PXY-TDIF complex reveals a conserved recognition mechanism among CLE peptide-receptor pairs.</title>
        <authorList>
            <person name="Zhang H."/>
            <person name="Lin X."/>
            <person name="Han Z."/>
            <person name="Qu L.-J."/>
            <person name="Chai J."/>
        </authorList>
    </citation>
    <scope>X-RAY CRYSTALLOGRAPHY (2.77 ANGSTROMS) OF 31-629 IN COMPLEX WITH CLE41</scope>
    <scope>FUNCTION</scope>
    <scope>MUTAGENESIS OF GLY-186; GLY-210; TYR-234; PHE-281; ASP-303; SER-305; ARG-421 AND ARG-423</scope>
    <scope>DISRUPTION PHENOTYPE</scope>
    <scope>GLYCOSYLATION AT ASN-111; ASN-271; ASN-356; ASN-378; ASN-442; ASN-471; ASN-525 AND ASN-542</scope>
    <scope>DISULFIDE BONDS</scope>
</reference>
<reference key="10">
    <citation type="journal article" date="2016" name="Mol. Plant">
        <title>SERK family receptor-like kinases function as co-receptors with PXY for plant vascular development.</title>
        <authorList>
            <person name="Zhang H."/>
            <person name="Lin X."/>
            <person name="Han Z."/>
            <person name="Wang J."/>
            <person name="Qu L.-J."/>
            <person name="Chai J."/>
        </authorList>
    </citation>
    <scope>X-RAY CRYSTALLOGRAPHY (3.50 ANGSTROMS) OF 32-629 IN COMPLEX WITH CLE44 AND TDR</scope>
    <scope>GLYCOSYLATION AT ASN-111 AND ASN-322</scope>
    <scope>DISULFIDE BONDS</scope>
</reference>
<reference key="11">
    <citation type="journal article" date="2016" name="Nat. Commun.">
        <title>Crystal structure of the plant receptor-like kinase TDR in complex with the TDIF peptide.</title>
        <authorList>
            <person name="Morita J."/>
            <person name="Kato K."/>
            <person name="Nakane T."/>
            <person name="Kondo Y."/>
            <person name="Fukuda H."/>
            <person name="Nishimasu H."/>
            <person name="Ishitani R."/>
            <person name="Nureki O."/>
        </authorList>
    </citation>
    <scope>X-RAY CRYSTALLOGRAPHY (3.00 ANGSTROMS) OF 31-631 IN COMPLEX WITH CLE41</scope>
    <scope>MUTAGENESIS OF PHE-161; SER-162; ASP-255; ILE-421 AND ARG-423</scope>
    <scope>GLYCOSYLATION AT ASN-111; ASN-258; ASN-271; ASN-322; ASN-356; ASN-378; ASN-430; ASN-442; ASN-471; ASN-525 AND ASN-542</scope>
    <scope>DISULFIDE BONDS</scope>
    <scope>SUBCELLULAR LOCATION</scope>
</reference>
<reference key="12">
    <citation type="submission" date="2016-04" db="PDB data bank">
        <title>Crystal structure of a TDIF-TDR complex.</title>
        <authorList>
            <person name="Xu G."/>
            <person name="Li Z."/>
        </authorList>
    </citation>
    <scope>X-RAY CRYSTALLOGRAPHY (2.65 ANGSTROMS) OF 30-642</scope>
    <scope>GLYCOSYLATION AT ASN-111; ASN-356; ASN-378; ASN-471 AND ASN-525</scope>
    <scope>DISULFIDE BONDS</scope>
</reference>
<feature type="signal peptide" evidence="4">
    <location>
        <begin position="1"/>
        <end position="29"/>
    </location>
</feature>
<feature type="chain" id="PRO_0000389463" description="Leucine-rich repeat receptor-like protein kinase TDR">
    <location>
        <begin position="30"/>
        <end position="1041"/>
    </location>
</feature>
<feature type="topological domain" description="Extracellular" evidence="4">
    <location>
        <begin position="30"/>
        <end position="652"/>
    </location>
</feature>
<feature type="transmembrane region" description="Helical" evidence="4">
    <location>
        <begin position="653"/>
        <end position="673"/>
    </location>
</feature>
<feature type="topological domain" description="Cytoplasmic" evidence="4">
    <location>
        <begin position="674"/>
        <end position="1041"/>
    </location>
</feature>
<feature type="repeat" description="LRR 1" evidence="4">
    <location>
        <begin position="80"/>
        <end position="104"/>
    </location>
</feature>
<feature type="repeat" description="LRR 2" evidence="4">
    <location>
        <begin position="105"/>
        <end position="128"/>
    </location>
</feature>
<feature type="repeat" description="LRR 3" evidence="4">
    <location>
        <begin position="130"/>
        <end position="152"/>
    </location>
</feature>
<feature type="repeat" description="LRR 4" evidence="4">
    <location>
        <begin position="154"/>
        <end position="176"/>
    </location>
</feature>
<feature type="repeat" description="LRR 5" evidence="4">
    <location>
        <begin position="177"/>
        <end position="199"/>
    </location>
</feature>
<feature type="repeat" description="LRR 6" evidence="4">
    <location>
        <begin position="200"/>
        <end position="224"/>
    </location>
</feature>
<feature type="repeat" description="LRR 7" evidence="4">
    <location>
        <begin position="225"/>
        <end position="248"/>
    </location>
</feature>
<feature type="repeat" description="LRR 8" evidence="4">
    <location>
        <begin position="250"/>
        <end position="272"/>
    </location>
</feature>
<feature type="repeat" description="LRR 9" evidence="4">
    <location>
        <begin position="273"/>
        <end position="296"/>
    </location>
</feature>
<feature type="repeat" description="LRR 10" evidence="4">
    <location>
        <begin position="297"/>
        <end position="319"/>
    </location>
</feature>
<feature type="repeat" description="LRR 11" evidence="4">
    <location>
        <begin position="321"/>
        <end position="344"/>
    </location>
</feature>
<feature type="repeat" description="LRR 12" evidence="4">
    <location>
        <begin position="345"/>
        <end position="368"/>
    </location>
</feature>
<feature type="repeat" description="LRR 13" evidence="4">
    <location>
        <begin position="369"/>
        <end position="392"/>
    </location>
</feature>
<feature type="repeat" description="LRR 14" evidence="4">
    <location>
        <begin position="394"/>
        <end position="416"/>
    </location>
</feature>
<feature type="repeat" description="LRR 15" evidence="4">
    <location>
        <begin position="418"/>
        <end position="439"/>
    </location>
</feature>
<feature type="repeat" description="LRR 16" evidence="4">
    <location>
        <begin position="440"/>
        <end position="464"/>
    </location>
</feature>
<feature type="repeat" description="LRR 17" evidence="4">
    <location>
        <begin position="466"/>
        <end position="488"/>
    </location>
</feature>
<feature type="repeat" description="LRR 18" evidence="4">
    <location>
        <begin position="511"/>
        <end position="535"/>
    </location>
</feature>
<feature type="repeat" description="LRR 19" evidence="4">
    <location>
        <begin position="536"/>
        <end position="558"/>
    </location>
</feature>
<feature type="repeat" description="LRR 20" evidence="4">
    <location>
        <begin position="559"/>
        <end position="583"/>
    </location>
</feature>
<feature type="repeat" description="LRR 21" evidence="4">
    <location>
        <begin position="585"/>
        <end position="607"/>
    </location>
</feature>
<feature type="domain" description="Protein kinase" evidence="5">
    <location>
        <begin position="719"/>
        <end position="1001"/>
    </location>
</feature>
<feature type="region of interest" description="CLE peptide binding" evidence="11 12 13 19 20 21">
    <location>
        <begin position="186"/>
        <end position="188"/>
    </location>
</feature>
<feature type="region of interest" description="CLE peptide binding" evidence="11 12 13 19 20 21">
    <location>
        <begin position="233"/>
        <end position="235"/>
    </location>
</feature>
<feature type="region of interest" description="CLE peptide binding" evidence="11 12 13 19 20 21">
    <location>
        <begin position="303"/>
        <end position="307"/>
    </location>
</feature>
<feature type="region of interest" description="CLE peptide binding" evidence="11 12 13 19 20 21">
    <location>
        <begin position="375"/>
        <end position="377"/>
    </location>
</feature>
<feature type="region of interest" description="CLE peptide binding" evidence="11 12 13 19 20 21">
    <location>
        <begin position="421"/>
        <end position="423"/>
    </location>
</feature>
<feature type="active site" description="Proton acceptor" evidence="5 7">
    <location>
        <position position="852"/>
    </location>
</feature>
<feature type="binding site" evidence="5">
    <location>
        <begin position="725"/>
        <end position="733"/>
    </location>
    <ligand>
        <name>ATP</name>
        <dbReference type="ChEBI" id="CHEBI:30616"/>
    </ligand>
</feature>
<feature type="binding site" evidence="5">
    <location>
        <position position="747"/>
    </location>
    <ligand>
        <name>ATP</name>
        <dbReference type="ChEBI" id="CHEBI:30616"/>
    </ligand>
</feature>
<feature type="site" description="CLE peptide binding" evidence="11 12 13 19 20 21">
    <location>
        <position position="210"/>
    </location>
</feature>
<feature type="site" description="CLE peptide binding" evidence="11 12 13 19 20 21">
    <location>
        <position position="255"/>
    </location>
</feature>
<feature type="site" description="CLE peptide binding" evidence="11 12 13 19 20 21">
    <location>
        <position position="353"/>
    </location>
</feature>
<feature type="modified residue" description="Phosphothreonine" evidence="2">
    <location>
        <position position="710"/>
    </location>
</feature>
<feature type="modified residue" description="Phosphotyrosine" evidence="2">
    <location>
        <position position="798"/>
    </location>
</feature>
<feature type="modified residue" description="Phosphotyrosine" evidence="1">
    <location>
        <position position="839"/>
    </location>
</feature>
<feature type="modified residue" description="Phosphoserine" evidence="3">
    <location>
        <position position="884"/>
    </location>
</feature>
<feature type="modified residue" description="Phosphotyrosine" evidence="1">
    <location>
        <position position="892"/>
    </location>
</feature>
<feature type="modified residue" description="Phosphotyrosine" evidence="3">
    <location>
        <position position="899"/>
    </location>
</feature>
<feature type="modified residue" description="Phosphothreonine" evidence="3">
    <location>
        <position position="900"/>
    </location>
</feature>
<feature type="glycosylation site" description="N-linked (GlcNAc...) asparagine" evidence="6">
    <location>
        <position position="78"/>
    </location>
</feature>
<feature type="glycosylation site" description="N-linked (GlcNAc...) asparagine" evidence="6">
    <location>
        <position position="92"/>
    </location>
</feature>
<feature type="glycosylation site" description="N-linked (GlcNAc...) asparagine" evidence="6 11 12 13 14 19 20 21 22 23">
    <location>
        <position position="111"/>
    </location>
</feature>
<feature type="glycosylation site" description="N-linked (GlcNAc...) asparagine" evidence="6 13 19">
    <location>
        <position position="258"/>
    </location>
</feature>
<feature type="glycosylation site" description="N-linked (GlcNAc...) asparagine" evidence="6 11 13 19 21">
    <location>
        <position position="271"/>
    </location>
</feature>
<feature type="glycosylation site" description="N-linked (GlcNAc...) asparagine" evidence="6 12 13 19 20">
    <location>
        <position position="322"/>
    </location>
</feature>
<feature type="glycosylation site" description="N-linked (GlcNAc...) asparagine" evidence="6">
    <location>
        <position position="332"/>
    </location>
</feature>
<feature type="glycosylation site" description="N-linked (GlcNAc...) asparagine" evidence="6 11 12 13 14 19 20 21 22 23">
    <location>
        <position position="356"/>
    </location>
</feature>
<feature type="glycosylation site" description="N-linked (GlcNAc...) asparagine" evidence="6 11 12 13 14 19 20 21 22 23">
    <location>
        <position position="378"/>
    </location>
</feature>
<feature type="glycosylation site" description="N-linked (GlcNAc...) asparagine" evidence="6 13 19">
    <location>
        <position position="430"/>
    </location>
</feature>
<feature type="glycosylation site" description="N-linked (GlcNAc...) asparagine" evidence="6 11 13 19 21">
    <location>
        <position position="442"/>
    </location>
</feature>
<feature type="glycosylation site" description="N-linked (GlcNAc...) asparagine" evidence="6 11 13 14 19 21 22 23">
    <location>
        <position position="471"/>
    </location>
</feature>
<feature type="glycosylation site" description="N-linked (GlcNAc...) asparagine" evidence="6 11 13 14 19 21 22 23">
    <location>
        <position position="525"/>
    </location>
</feature>
<feature type="glycosylation site" description="N-linked (GlcNAc...) asparagine" evidence="6 11 13 19 21">
    <location>
        <position position="542"/>
    </location>
</feature>
<feature type="glycosylation site" description="N-linked (GlcNAc...) asparagine" evidence="6">
    <location>
        <position position="590"/>
    </location>
</feature>
<feature type="disulfide bond" evidence="11 12 13 19 20 21">
    <location>
        <begin position="69"/>
        <end position="76"/>
    </location>
</feature>
<feature type="disulfide bond" evidence="11 12 13 14 19 20 21 22 23">
    <location>
        <begin position="390"/>
        <end position="416"/>
    </location>
</feature>
<feature type="disulfide bond" evidence="11 12 13 14 19 20 21 22 23">
    <location>
        <begin position="511"/>
        <end position="535"/>
    </location>
</feature>
<feature type="disulfide bond" evidence="11 12 13 19 20 21">
    <location>
        <begin position="620"/>
        <end position="628"/>
    </location>
</feature>
<feature type="mutagenesis site" description="Reduced interaction with CLE41 peptide." evidence="13">
    <original>F</original>
    <variation>A</variation>
    <location>
        <position position="161"/>
    </location>
</feature>
<feature type="mutagenesis site" description="Reduced interaction with CLE41 peptide." evidence="13">
    <original>S</original>
    <variation>A</variation>
    <location>
        <position position="162"/>
    </location>
</feature>
<feature type="mutagenesis site" description="Reduced interaction with CLE41 peptide leading to desorganized vascular tissues." evidence="11">
    <original>G</original>
    <variation>A</variation>
    <location>
        <position position="186"/>
    </location>
</feature>
<feature type="mutagenesis site" description="Reduced interaction with CLE41 peptide leading to desorganized vascular tissues." evidence="11">
    <original>G</original>
    <variation>A</variation>
    <location>
        <position position="210"/>
    </location>
</feature>
<feature type="mutagenesis site" description="Reduced interaction with CLE41 peptide leading to desorganized vascular tissues." evidence="11">
    <original>Y</original>
    <variation>A</variation>
    <location>
        <position position="234"/>
    </location>
</feature>
<feature type="mutagenesis site" description="Reduced interaction with CLE41 peptide." evidence="13">
    <original>D</original>
    <variation>E</variation>
    <location>
        <position position="255"/>
    </location>
</feature>
<feature type="mutagenesis site" description="Reduced interaction with CLE41 peptide." evidence="11">
    <original>F</original>
    <variation>A</variation>
    <location>
        <position position="281"/>
    </location>
</feature>
<feature type="mutagenesis site" description="Reduced interaction with CLE41 peptide leading to a cambium-defective phenotype and adjacent phloem and xylem cells; when associated with A-305." evidence="11">
    <original>D</original>
    <variation>R</variation>
    <location>
        <position position="303"/>
    </location>
</feature>
<feature type="mutagenesis site" description="Reduced interaction with CLE41 peptide leading to a cambium-defective phenotype and adjacent phloem and xylem cells; when associated with R-303." evidence="11">
    <original>S</original>
    <variation>A</variation>
    <location>
        <position position="305"/>
    </location>
</feature>
<feature type="mutagenesis site" description="Slightly reduced interaction with CLE41 peptide. Impaired interaction with CLE41 peptide leading to a cambium-defective phenotype and adjacent phloem and xylem cells; when associated with A-423." evidence="11 13">
    <original>R</original>
    <variation>A</variation>
    <location>
        <position position="421"/>
    </location>
</feature>
<feature type="mutagenesis site" description="Reduced interaction with CLE41 peptide. Impaired interaction with CLE41 peptide leading to a cambium-defective phenotype and adjacent phloem and xylem cells; when associated with A-421." evidence="11 13">
    <original>R</original>
    <variation>A</variation>
    <location>
        <position position="423"/>
    </location>
</feature>
<feature type="helix" evidence="26">
    <location>
        <begin position="34"/>
        <end position="45"/>
    </location>
</feature>
<feature type="helix" evidence="26">
    <location>
        <begin position="50"/>
        <end position="53"/>
    </location>
</feature>
<feature type="strand" evidence="28">
    <location>
        <begin position="68"/>
        <end position="73"/>
    </location>
</feature>
<feature type="helix" evidence="28">
    <location>
        <begin position="74"/>
        <end position="77"/>
    </location>
</feature>
<feature type="turn" evidence="26">
    <location>
        <begin position="78"/>
        <end position="80"/>
    </location>
</feature>
<feature type="strand" evidence="28">
    <location>
        <begin position="85"/>
        <end position="87"/>
    </location>
</feature>
<feature type="helix" evidence="28">
    <location>
        <begin position="99"/>
        <end position="103"/>
    </location>
</feature>
<feature type="strand" evidence="28">
    <location>
        <begin position="109"/>
        <end position="111"/>
    </location>
</feature>
<feature type="strand" evidence="28">
    <location>
        <begin position="114"/>
        <end position="117"/>
    </location>
</feature>
<feature type="strand" evidence="24">
    <location>
        <begin position="118"/>
        <end position="120"/>
    </location>
</feature>
<feature type="helix" evidence="28">
    <location>
        <begin position="123"/>
        <end position="127"/>
    </location>
</feature>
<feature type="strand" evidence="28">
    <location>
        <begin position="133"/>
        <end position="135"/>
    </location>
</feature>
<feature type="strand" evidence="28">
    <location>
        <begin position="142"/>
        <end position="144"/>
    </location>
</feature>
<feature type="helix" evidence="28">
    <location>
        <begin position="149"/>
        <end position="151"/>
    </location>
</feature>
<feature type="strand" evidence="28">
    <location>
        <begin position="157"/>
        <end position="159"/>
    </location>
</feature>
<feature type="strand" evidence="28">
    <location>
        <begin position="164"/>
        <end position="168"/>
    </location>
</feature>
<feature type="helix" evidence="28">
    <location>
        <begin position="171"/>
        <end position="175"/>
    </location>
</feature>
<feature type="strand" evidence="28">
    <location>
        <begin position="181"/>
        <end position="183"/>
    </location>
</feature>
<feature type="strand" evidence="26">
    <location>
        <begin position="186"/>
        <end position="191"/>
    </location>
</feature>
<feature type="helix" evidence="28">
    <location>
        <begin position="195"/>
        <end position="199"/>
    </location>
</feature>
<feature type="strand" evidence="28">
    <location>
        <begin position="205"/>
        <end position="207"/>
    </location>
</feature>
<feature type="strand" evidence="28">
    <location>
        <begin position="210"/>
        <end position="216"/>
    </location>
</feature>
<feature type="helix" evidence="28">
    <location>
        <begin position="219"/>
        <end position="223"/>
    </location>
</feature>
<feature type="strand" evidence="28">
    <location>
        <begin position="229"/>
        <end position="231"/>
    </location>
</feature>
<feature type="strand" evidence="28">
    <location>
        <begin position="234"/>
        <end position="239"/>
    </location>
</feature>
<feature type="helix" evidence="28">
    <location>
        <begin position="243"/>
        <end position="247"/>
    </location>
</feature>
<feature type="strand" evidence="26">
    <location>
        <begin position="253"/>
        <end position="255"/>
    </location>
</feature>
<feature type="strand" evidence="28">
    <location>
        <begin position="262"/>
        <end position="264"/>
    </location>
</feature>
<feature type="helix" evidence="28">
    <location>
        <begin position="267"/>
        <end position="271"/>
    </location>
</feature>
<feature type="strand" evidence="28">
    <location>
        <begin position="277"/>
        <end position="279"/>
    </location>
</feature>
<feature type="strand" evidence="28">
    <location>
        <begin position="282"/>
        <end position="287"/>
    </location>
</feature>
<feature type="helix" evidence="28">
    <location>
        <begin position="291"/>
        <end position="295"/>
    </location>
</feature>
<feature type="strand" evidence="28">
    <location>
        <begin position="301"/>
        <end position="303"/>
    </location>
</feature>
<feature type="strand" evidence="28">
    <location>
        <begin position="310"/>
        <end position="312"/>
    </location>
</feature>
<feature type="helix" evidence="28">
    <location>
        <begin position="315"/>
        <end position="319"/>
    </location>
</feature>
<feature type="strand" evidence="28">
    <location>
        <begin position="325"/>
        <end position="327"/>
    </location>
</feature>
<feature type="strand" evidence="28">
    <location>
        <begin position="330"/>
        <end position="335"/>
    </location>
</feature>
<feature type="helix" evidence="28">
    <location>
        <begin position="339"/>
        <end position="343"/>
    </location>
</feature>
<feature type="strand" evidence="28">
    <location>
        <begin position="349"/>
        <end position="351"/>
    </location>
</feature>
<feature type="strand" evidence="26">
    <location>
        <begin position="354"/>
        <end position="357"/>
    </location>
</feature>
<feature type="turn" evidence="28">
    <location>
        <begin position="363"/>
        <end position="368"/>
    </location>
</feature>
<feature type="strand" evidence="28">
    <location>
        <begin position="373"/>
        <end position="375"/>
    </location>
</feature>
<feature type="turn" evidence="28">
    <location>
        <begin position="387"/>
        <end position="392"/>
    </location>
</feature>
<feature type="strand" evidence="28">
    <location>
        <begin position="397"/>
        <end position="399"/>
    </location>
</feature>
<feature type="strand" evidence="25">
    <location>
        <begin position="402"/>
        <end position="405"/>
    </location>
</feature>
<feature type="strand" evidence="28">
    <location>
        <begin position="406"/>
        <end position="408"/>
    </location>
</feature>
<feature type="helix" evidence="28">
    <location>
        <begin position="411"/>
        <end position="415"/>
    </location>
</feature>
<feature type="strand" evidence="28">
    <location>
        <begin position="421"/>
        <end position="423"/>
    </location>
</feature>
<feature type="strand" evidence="28">
    <location>
        <begin position="426"/>
        <end position="431"/>
    </location>
</feature>
<feature type="helix" evidence="28">
    <location>
        <begin position="437"/>
        <end position="439"/>
    </location>
</feature>
<feature type="strand" evidence="28">
    <location>
        <begin position="445"/>
        <end position="447"/>
    </location>
</feature>
<feature type="strand" evidence="28">
    <location>
        <begin position="450"/>
        <end position="453"/>
    </location>
</feature>
<feature type="helix" evidence="28">
    <location>
        <begin position="459"/>
        <end position="463"/>
    </location>
</feature>
<feature type="strand" evidence="26">
    <location>
        <begin position="469"/>
        <end position="471"/>
    </location>
</feature>
<feature type="helix" evidence="28">
    <location>
        <begin position="485"/>
        <end position="487"/>
    </location>
</feature>
<feature type="strand" evidence="28">
    <location>
        <begin position="492"/>
        <end position="494"/>
    </location>
</feature>
<feature type="strand" evidence="26">
    <location>
        <begin position="502"/>
        <end position="504"/>
    </location>
</feature>
<feature type="strand" evidence="28">
    <location>
        <begin position="516"/>
        <end position="518"/>
    </location>
</feature>
<feature type="strand" evidence="28">
    <location>
        <begin position="521"/>
        <end position="524"/>
    </location>
</feature>
<feature type="helix" evidence="28">
    <location>
        <begin position="532"/>
        <end position="534"/>
    </location>
</feature>
<feature type="strand" evidence="28">
    <location>
        <begin position="540"/>
        <end position="542"/>
    </location>
</feature>
<feature type="strand" evidence="25">
    <location>
        <begin position="545"/>
        <end position="548"/>
    </location>
</feature>
<feature type="helix" evidence="28">
    <location>
        <begin position="554"/>
        <end position="558"/>
    </location>
</feature>
<feature type="strand" evidence="28">
    <location>
        <begin position="564"/>
        <end position="566"/>
    </location>
</feature>
<feature type="strand" evidence="28">
    <location>
        <begin position="569"/>
        <end position="574"/>
    </location>
</feature>
<feature type="helix" evidence="28">
    <location>
        <begin position="578"/>
        <end position="582"/>
    </location>
</feature>
<feature type="strand" evidence="28">
    <location>
        <begin position="588"/>
        <end position="590"/>
    </location>
</feature>
<feature type="strand" evidence="28">
    <location>
        <begin position="593"/>
        <end position="596"/>
    </location>
</feature>
<feature type="strand" evidence="26">
    <location>
        <begin position="597"/>
        <end position="599"/>
    </location>
</feature>
<feature type="helix" evidence="26">
    <location>
        <begin position="604"/>
        <end position="607"/>
    </location>
</feature>
<feature type="helix" evidence="28">
    <location>
        <begin position="610"/>
        <end position="612"/>
    </location>
</feature>
<feature type="strand" evidence="27">
    <location>
        <begin position="619"/>
        <end position="623"/>
    </location>
</feature>